<comment type="function">
    <text evidence="1">Catalyzes the acyloin condensation reaction between C atoms 2 and 3 of pyruvate and glyceraldehyde 3-phosphate to yield 1-deoxy-D-xylulose-5-phosphate (DXP).</text>
</comment>
<comment type="catalytic activity">
    <reaction evidence="1">
        <text>D-glyceraldehyde 3-phosphate + pyruvate + H(+) = 1-deoxy-D-xylulose 5-phosphate + CO2</text>
        <dbReference type="Rhea" id="RHEA:12605"/>
        <dbReference type="ChEBI" id="CHEBI:15361"/>
        <dbReference type="ChEBI" id="CHEBI:15378"/>
        <dbReference type="ChEBI" id="CHEBI:16526"/>
        <dbReference type="ChEBI" id="CHEBI:57792"/>
        <dbReference type="ChEBI" id="CHEBI:59776"/>
        <dbReference type="EC" id="2.2.1.7"/>
    </reaction>
</comment>
<comment type="cofactor">
    <cofactor evidence="1">
        <name>Mg(2+)</name>
        <dbReference type="ChEBI" id="CHEBI:18420"/>
    </cofactor>
    <text evidence="1">Binds 1 Mg(2+) ion per subunit.</text>
</comment>
<comment type="cofactor">
    <cofactor evidence="1">
        <name>thiamine diphosphate</name>
        <dbReference type="ChEBI" id="CHEBI:58937"/>
    </cofactor>
    <text evidence="1">Binds 1 thiamine pyrophosphate per subunit.</text>
</comment>
<comment type="pathway">
    <text evidence="1">Metabolic intermediate biosynthesis; 1-deoxy-D-xylulose 5-phosphate biosynthesis; 1-deoxy-D-xylulose 5-phosphate from D-glyceraldehyde 3-phosphate and pyruvate: step 1/1.</text>
</comment>
<comment type="subunit">
    <text evidence="1">Homodimer.</text>
</comment>
<comment type="similarity">
    <text evidence="1">Belongs to the transketolase family. DXPS subfamily.</text>
</comment>
<organism>
    <name type="scientific">Actinobacillus pleuropneumoniae serotype 3 (strain JL03)</name>
    <dbReference type="NCBI Taxonomy" id="434271"/>
    <lineage>
        <taxon>Bacteria</taxon>
        <taxon>Pseudomonadati</taxon>
        <taxon>Pseudomonadota</taxon>
        <taxon>Gammaproteobacteria</taxon>
        <taxon>Pasteurellales</taxon>
        <taxon>Pasteurellaceae</taxon>
        <taxon>Actinobacillus</taxon>
    </lineage>
</organism>
<sequence>MQNKYPLLSQINSPEDLRLLAKEQLQSVADELRAYLLESVSQTSGHLASGLGVVELTVALHYVYQTPFDQLIWDVGHQAYPHKILTGRRDQMHTIRQKNGIHPFPWREESLYDVLSVGHSSTSISAGVGIAVAAEKENAGRKTVCVIGDGAITAGMAFEAMNHAGALHTDMLVILNDNEMSISENVGALNNHLARIFSGSIYTTVRDGSKKVLDKVPTIKNFMKKSEEHMKGVISPESTLFEELGFNYIGPIDGHNIDELVKTLSNMRELKGPQFLHIRTKKGKGYEPAENDPIGYHGVPKFDPTCGQLPKSKTIPTYSDIFGNWLCEMAEQDSKLIGITPAMREGSGMVEFSKRFPEQYFDVAIAEQHAVTFGAGLAIAGYKPVVAIYSSFLQRAYDQLIHDVAIQNLPVIFAIDRAGIVGADGQTHQGAFDVSFMRCIPNMTIMCPSDENEMRQMLYTAYRMNTPTAVRYPRGNAQGVALAPMQALEVGKGKLIQQGQKVAILNFGPLLNEARIVAEKHNYTLADMRFVKPLDEQLVAELADSHELLVTLEENAIQGGAGSAVNEYLQKIGKIRPLVMLGIPDFFVPQATQAESYADLGLDAAGIEQRIQAVVNQ</sequence>
<keyword id="KW-0414">Isoprene biosynthesis</keyword>
<keyword id="KW-0460">Magnesium</keyword>
<keyword id="KW-0479">Metal-binding</keyword>
<keyword id="KW-0784">Thiamine biosynthesis</keyword>
<keyword id="KW-0786">Thiamine pyrophosphate</keyword>
<keyword id="KW-0808">Transferase</keyword>
<evidence type="ECO:0000255" key="1">
    <source>
        <dbReference type="HAMAP-Rule" id="MF_00315"/>
    </source>
</evidence>
<name>DXS_ACTPJ</name>
<accession>B0BSL0</accession>
<feature type="chain" id="PRO_1000115716" description="1-deoxy-D-xylulose-5-phosphate synthase">
    <location>
        <begin position="1"/>
        <end position="617"/>
    </location>
</feature>
<feature type="binding site" evidence="1">
    <location>
        <position position="77"/>
    </location>
    <ligand>
        <name>thiamine diphosphate</name>
        <dbReference type="ChEBI" id="CHEBI:58937"/>
    </ligand>
</feature>
<feature type="binding site" evidence="1">
    <location>
        <begin position="118"/>
        <end position="120"/>
    </location>
    <ligand>
        <name>thiamine diphosphate</name>
        <dbReference type="ChEBI" id="CHEBI:58937"/>
    </ligand>
</feature>
<feature type="binding site" evidence="1">
    <location>
        <position position="149"/>
    </location>
    <ligand>
        <name>Mg(2+)</name>
        <dbReference type="ChEBI" id="CHEBI:18420"/>
    </ligand>
</feature>
<feature type="binding site" evidence="1">
    <location>
        <begin position="150"/>
        <end position="151"/>
    </location>
    <ligand>
        <name>thiamine diphosphate</name>
        <dbReference type="ChEBI" id="CHEBI:58937"/>
    </ligand>
</feature>
<feature type="binding site" evidence="1">
    <location>
        <position position="178"/>
    </location>
    <ligand>
        <name>Mg(2+)</name>
        <dbReference type="ChEBI" id="CHEBI:18420"/>
    </ligand>
</feature>
<feature type="binding site" evidence="1">
    <location>
        <position position="178"/>
    </location>
    <ligand>
        <name>thiamine diphosphate</name>
        <dbReference type="ChEBI" id="CHEBI:58937"/>
    </ligand>
</feature>
<feature type="binding site" evidence="1">
    <location>
        <position position="286"/>
    </location>
    <ligand>
        <name>thiamine diphosphate</name>
        <dbReference type="ChEBI" id="CHEBI:58937"/>
    </ligand>
</feature>
<feature type="binding site" evidence="1">
    <location>
        <position position="367"/>
    </location>
    <ligand>
        <name>thiamine diphosphate</name>
        <dbReference type="ChEBI" id="CHEBI:58937"/>
    </ligand>
</feature>
<proteinExistence type="inferred from homology"/>
<protein>
    <recommendedName>
        <fullName evidence="1">1-deoxy-D-xylulose-5-phosphate synthase</fullName>
        <ecNumber evidence="1">2.2.1.7</ecNumber>
    </recommendedName>
    <alternativeName>
        <fullName evidence="1">1-deoxyxylulose-5-phosphate synthase</fullName>
        <shortName evidence="1">DXP synthase</shortName>
        <shortName evidence="1">DXPS</shortName>
    </alternativeName>
</protein>
<reference key="1">
    <citation type="journal article" date="2008" name="PLoS ONE">
        <title>Genome biology of Actinobacillus pleuropneumoniae JL03, an isolate of serotype 3 prevalent in China.</title>
        <authorList>
            <person name="Xu Z."/>
            <person name="Zhou Y."/>
            <person name="Li L."/>
            <person name="Zhou R."/>
            <person name="Xiao S."/>
            <person name="Wan Y."/>
            <person name="Zhang S."/>
            <person name="Wang K."/>
            <person name="Li W."/>
            <person name="Li L."/>
            <person name="Jin H."/>
            <person name="Kang M."/>
            <person name="Dalai B."/>
            <person name="Li T."/>
            <person name="Liu L."/>
            <person name="Cheng Y."/>
            <person name="Zhang L."/>
            <person name="Xu T."/>
            <person name="Zheng H."/>
            <person name="Pu S."/>
            <person name="Wang B."/>
            <person name="Gu W."/>
            <person name="Zhang X.L."/>
            <person name="Zhu G.-F."/>
            <person name="Wang S."/>
            <person name="Zhao G.-P."/>
            <person name="Chen H."/>
        </authorList>
    </citation>
    <scope>NUCLEOTIDE SEQUENCE [LARGE SCALE GENOMIC DNA]</scope>
    <source>
        <strain>JL03</strain>
    </source>
</reference>
<gene>
    <name evidence="1" type="primary">dxs</name>
    <name type="ordered locus">APJL_0208</name>
</gene>
<dbReference type="EC" id="2.2.1.7" evidence="1"/>
<dbReference type="EMBL" id="CP000687">
    <property type="protein sequence ID" value="ABY68812.1"/>
    <property type="molecule type" value="Genomic_DNA"/>
</dbReference>
<dbReference type="RefSeq" id="WP_005595991.1">
    <property type="nucleotide sequence ID" value="NC_010278.1"/>
</dbReference>
<dbReference type="SMR" id="B0BSL0"/>
<dbReference type="GeneID" id="48598354"/>
<dbReference type="KEGG" id="apj:APJL_0208"/>
<dbReference type="HOGENOM" id="CLU_009227_1_4_6"/>
<dbReference type="UniPathway" id="UPA00064">
    <property type="reaction ID" value="UER00091"/>
</dbReference>
<dbReference type="Proteomes" id="UP000008547">
    <property type="component" value="Chromosome"/>
</dbReference>
<dbReference type="GO" id="GO:0005829">
    <property type="term" value="C:cytosol"/>
    <property type="evidence" value="ECO:0007669"/>
    <property type="project" value="TreeGrafter"/>
</dbReference>
<dbReference type="GO" id="GO:0008661">
    <property type="term" value="F:1-deoxy-D-xylulose-5-phosphate synthase activity"/>
    <property type="evidence" value="ECO:0007669"/>
    <property type="project" value="UniProtKB-UniRule"/>
</dbReference>
<dbReference type="GO" id="GO:0000287">
    <property type="term" value="F:magnesium ion binding"/>
    <property type="evidence" value="ECO:0007669"/>
    <property type="project" value="UniProtKB-UniRule"/>
</dbReference>
<dbReference type="GO" id="GO:0030976">
    <property type="term" value="F:thiamine pyrophosphate binding"/>
    <property type="evidence" value="ECO:0007669"/>
    <property type="project" value="UniProtKB-UniRule"/>
</dbReference>
<dbReference type="GO" id="GO:0052865">
    <property type="term" value="P:1-deoxy-D-xylulose 5-phosphate biosynthetic process"/>
    <property type="evidence" value="ECO:0007669"/>
    <property type="project" value="UniProtKB-UniPathway"/>
</dbReference>
<dbReference type="GO" id="GO:0019288">
    <property type="term" value="P:isopentenyl diphosphate biosynthetic process, methylerythritol 4-phosphate pathway"/>
    <property type="evidence" value="ECO:0007669"/>
    <property type="project" value="TreeGrafter"/>
</dbReference>
<dbReference type="GO" id="GO:0016114">
    <property type="term" value="P:terpenoid biosynthetic process"/>
    <property type="evidence" value="ECO:0007669"/>
    <property type="project" value="UniProtKB-UniRule"/>
</dbReference>
<dbReference type="GO" id="GO:0009228">
    <property type="term" value="P:thiamine biosynthetic process"/>
    <property type="evidence" value="ECO:0007669"/>
    <property type="project" value="UniProtKB-UniRule"/>
</dbReference>
<dbReference type="CDD" id="cd02007">
    <property type="entry name" value="TPP_DXS"/>
    <property type="match status" value="1"/>
</dbReference>
<dbReference type="CDD" id="cd07033">
    <property type="entry name" value="TPP_PYR_DXS_TK_like"/>
    <property type="match status" value="1"/>
</dbReference>
<dbReference type="FunFam" id="3.40.50.920:FF:000002">
    <property type="entry name" value="1-deoxy-D-xylulose-5-phosphate synthase"/>
    <property type="match status" value="1"/>
</dbReference>
<dbReference type="FunFam" id="3.40.50.970:FF:000005">
    <property type="entry name" value="1-deoxy-D-xylulose-5-phosphate synthase"/>
    <property type="match status" value="1"/>
</dbReference>
<dbReference type="Gene3D" id="3.40.50.920">
    <property type="match status" value="1"/>
</dbReference>
<dbReference type="Gene3D" id="3.40.50.970">
    <property type="match status" value="2"/>
</dbReference>
<dbReference type="HAMAP" id="MF_00315">
    <property type="entry name" value="DXP_synth"/>
    <property type="match status" value="1"/>
</dbReference>
<dbReference type="InterPro" id="IPR005477">
    <property type="entry name" value="Dxylulose-5-P_synthase"/>
</dbReference>
<dbReference type="InterPro" id="IPR029061">
    <property type="entry name" value="THDP-binding"/>
</dbReference>
<dbReference type="InterPro" id="IPR009014">
    <property type="entry name" value="Transketo_C/PFOR_II"/>
</dbReference>
<dbReference type="InterPro" id="IPR005475">
    <property type="entry name" value="Transketolase-like_Pyr-bd"/>
</dbReference>
<dbReference type="InterPro" id="IPR020826">
    <property type="entry name" value="Transketolase_BS"/>
</dbReference>
<dbReference type="InterPro" id="IPR033248">
    <property type="entry name" value="Transketolase_C"/>
</dbReference>
<dbReference type="InterPro" id="IPR049557">
    <property type="entry name" value="Transketolase_CS"/>
</dbReference>
<dbReference type="NCBIfam" id="TIGR00204">
    <property type="entry name" value="dxs"/>
    <property type="match status" value="1"/>
</dbReference>
<dbReference type="NCBIfam" id="NF003933">
    <property type="entry name" value="PRK05444.2-2"/>
    <property type="match status" value="1"/>
</dbReference>
<dbReference type="PANTHER" id="PTHR43322">
    <property type="entry name" value="1-D-DEOXYXYLULOSE 5-PHOSPHATE SYNTHASE-RELATED"/>
    <property type="match status" value="1"/>
</dbReference>
<dbReference type="PANTHER" id="PTHR43322:SF5">
    <property type="entry name" value="1-DEOXY-D-XYLULOSE-5-PHOSPHATE SYNTHASE, CHLOROPLASTIC"/>
    <property type="match status" value="1"/>
</dbReference>
<dbReference type="Pfam" id="PF13292">
    <property type="entry name" value="DXP_synthase_N"/>
    <property type="match status" value="1"/>
</dbReference>
<dbReference type="Pfam" id="PF02779">
    <property type="entry name" value="Transket_pyr"/>
    <property type="match status" value="1"/>
</dbReference>
<dbReference type="Pfam" id="PF02780">
    <property type="entry name" value="Transketolase_C"/>
    <property type="match status" value="1"/>
</dbReference>
<dbReference type="SMART" id="SM00861">
    <property type="entry name" value="Transket_pyr"/>
    <property type="match status" value="1"/>
</dbReference>
<dbReference type="SUPFAM" id="SSF52518">
    <property type="entry name" value="Thiamin diphosphate-binding fold (THDP-binding)"/>
    <property type="match status" value="2"/>
</dbReference>
<dbReference type="SUPFAM" id="SSF52922">
    <property type="entry name" value="TK C-terminal domain-like"/>
    <property type="match status" value="1"/>
</dbReference>
<dbReference type="PROSITE" id="PS00801">
    <property type="entry name" value="TRANSKETOLASE_1"/>
    <property type="match status" value="1"/>
</dbReference>
<dbReference type="PROSITE" id="PS00802">
    <property type="entry name" value="TRANSKETOLASE_2"/>
    <property type="match status" value="1"/>
</dbReference>